<organism>
    <name type="scientific">Methylobacterium sp. (strain 4-46)</name>
    <dbReference type="NCBI Taxonomy" id="426117"/>
    <lineage>
        <taxon>Bacteria</taxon>
        <taxon>Pseudomonadati</taxon>
        <taxon>Pseudomonadota</taxon>
        <taxon>Alphaproteobacteria</taxon>
        <taxon>Hyphomicrobiales</taxon>
        <taxon>Methylobacteriaceae</taxon>
        <taxon>Methylobacterium</taxon>
    </lineage>
</organism>
<accession>B0UHX5</accession>
<evidence type="ECO:0000255" key="1">
    <source>
        <dbReference type="HAMAP-Rule" id="MF_01322"/>
    </source>
</evidence>
<feature type="chain" id="PRO_1000141783" description="DNA-directed RNA polymerase subunit beta'">
    <location>
        <begin position="1"/>
        <end position="1400"/>
    </location>
</feature>
<feature type="binding site" evidence="1">
    <location>
        <position position="71"/>
    </location>
    <ligand>
        <name>Zn(2+)</name>
        <dbReference type="ChEBI" id="CHEBI:29105"/>
        <label>1</label>
    </ligand>
</feature>
<feature type="binding site" evidence="1">
    <location>
        <position position="73"/>
    </location>
    <ligand>
        <name>Zn(2+)</name>
        <dbReference type="ChEBI" id="CHEBI:29105"/>
        <label>1</label>
    </ligand>
</feature>
<feature type="binding site" evidence="1">
    <location>
        <position position="86"/>
    </location>
    <ligand>
        <name>Zn(2+)</name>
        <dbReference type="ChEBI" id="CHEBI:29105"/>
        <label>1</label>
    </ligand>
</feature>
<feature type="binding site" evidence="1">
    <location>
        <position position="89"/>
    </location>
    <ligand>
        <name>Zn(2+)</name>
        <dbReference type="ChEBI" id="CHEBI:29105"/>
        <label>1</label>
    </ligand>
</feature>
<feature type="binding site" evidence="1">
    <location>
        <position position="462"/>
    </location>
    <ligand>
        <name>Mg(2+)</name>
        <dbReference type="ChEBI" id="CHEBI:18420"/>
    </ligand>
</feature>
<feature type="binding site" evidence="1">
    <location>
        <position position="464"/>
    </location>
    <ligand>
        <name>Mg(2+)</name>
        <dbReference type="ChEBI" id="CHEBI:18420"/>
    </ligand>
</feature>
<feature type="binding site" evidence="1">
    <location>
        <position position="466"/>
    </location>
    <ligand>
        <name>Mg(2+)</name>
        <dbReference type="ChEBI" id="CHEBI:18420"/>
    </ligand>
</feature>
<feature type="binding site" evidence="1">
    <location>
        <position position="820"/>
    </location>
    <ligand>
        <name>Zn(2+)</name>
        <dbReference type="ChEBI" id="CHEBI:29105"/>
        <label>2</label>
    </ligand>
</feature>
<feature type="binding site" evidence="1">
    <location>
        <position position="893"/>
    </location>
    <ligand>
        <name>Zn(2+)</name>
        <dbReference type="ChEBI" id="CHEBI:29105"/>
        <label>2</label>
    </ligand>
</feature>
<feature type="binding site" evidence="1">
    <location>
        <position position="900"/>
    </location>
    <ligand>
        <name>Zn(2+)</name>
        <dbReference type="ChEBI" id="CHEBI:29105"/>
        <label>2</label>
    </ligand>
</feature>
<feature type="binding site" evidence="1">
    <location>
        <position position="903"/>
    </location>
    <ligand>
        <name>Zn(2+)</name>
        <dbReference type="ChEBI" id="CHEBI:29105"/>
        <label>2</label>
    </ligand>
</feature>
<protein>
    <recommendedName>
        <fullName evidence="1">DNA-directed RNA polymerase subunit beta'</fullName>
        <shortName evidence="1">RNAP subunit beta'</shortName>
        <ecNumber evidence="1">2.7.7.6</ecNumber>
    </recommendedName>
    <alternativeName>
        <fullName evidence="1">RNA polymerase subunit beta'</fullName>
    </alternativeName>
    <alternativeName>
        <fullName evidence="1">Transcriptase subunit beta'</fullName>
    </alternativeName>
</protein>
<proteinExistence type="inferred from homology"/>
<gene>
    <name evidence="1" type="primary">rpoC</name>
    <name type="ordered locus">M446_0359</name>
</gene>
<reference key="1">
    <citation type="submission" date="2008-02" db="EMBL/GenBank/DDBJ databases">
        <title>Complete sequence of chromosome of Methylobacterium sp. 4-46.</title>
        <authorList>
            <consortium name="US DOE Joint Genome Institute"/>
            <person name="Copeland A."/>
            <person name="Lucas S."/>
            <person name="Lapidus A."/>
            <person name="Glavina del Rio T."/>
            <person name="Dalin E."/>
            <person name="Tice H."/>
            <person name="Bruce D."/>
            <person name="Goodwin L."/>
            <person name="Pitluck S."/>
            <person name="Chertkov O."/>
            <person name="Brettin T."/>
            <person name="Detter J.C."/>
            <person name="Han C."/>
            <person name="Kuske C.R."/>
            <person name="Schmutz J."/>
            <person name="Larimer F."/>
            <person name="Land M."/>
            <person name="Hauser L."/>
            <person name="Kyrpides N."/>
            <person name="Ivanova N."/>
            <person name="Marx C.J."/>
            <person name="Richardson P."/>
        </authorList>
    </citation>
    <scope>NUCLEOTIDE SEQUENCE [LARGE SCALE GENOMIC DNA]</scope>
    <source>
        <strain>4-46</strain>
    </source>
</reference>
<sequence>MNQEVMNLFNQQAQPQSFDQIKISISSPEKILSWSYGEIKKPETINYRTFKPERDGLFCARIFGPIKDYECLCGKYKRMKYKGVICEKCGVEVTLARVRRDRMGHIELAAPVAHIWFLKSLPSRIGLLLDMALKDLERILYFESYVVIEPGLTPLKERQLLSEEEYLRAQEEYGEDSFTAMIGAEAIRRILQDLNLEKIAADLRQEIATTTSDLKPKKLLKRLKIIEAFQLSGNKPEWMILTVVPVIPPDLRPLVPLDGGRFATSDLNDLYRRVINRNNRLKRLIELRAPDIIIRNEKRMLQEAVDALFDNGRRGRVITGANKRPLKSLADMLKGKQGRFRQNLLGKRVDYSGRSVIVVGPELKLHQCGLPKKMALELFKPFIYARLDAKGFSATVKQAKKLVEKEKPEVWDILDEVIREHPVMLNRAPTLHRLGIQAFEPKLIEGKAIQLHPLVCAAFNADFDGDQMAVHVPLSLEAQLEARVLMMSTNNILHPANGAPIIVPSQDIVLGLYYLSIVADGAPGEYKSNNPLNPMQGVYGDFGELEHALASRAVTLHSKVKWRWKGLGPDGEEVTRTYDTTPGRVILSSVLPRHPKVPFDVVNKLMTKKEISAMIDTVYRHCGQKESVIFCDRIMGLGFSHAFKAGISFGKDDMVVPENKWTIVDETRALVKDYEQQYQDGLITQGEKYNKVVDAWAKCSDRLASEMMNRISSVQKDEKGADKQVNSIYMMSHSGARGSPAQMKQLAAMRGLMAKPSGEIIESPIISNFKEGLDVLEYFNSTHGARKGLADTALKTANSGYLTRRLVDVAQDAVIREVDCGTDAGIRMRAIIDAGQVVATLATRILGRATAEDLVAQDGSIIVPKGQMIEERHLDAINKAGIQEVKIRSVLVCATKNGVCATCYGRDLARGTPVNQGEAVGVIAAQSIGEPGTQLTMRTFHIGGAAQIADSSFIESSFEGTVRIRNRGLARNSDGDLIAIGRNVAVVIVGPDGTERAVHRLQYGARVRVDEGDSIKRGQRIAEWDPYTRPILTEVDGIVAYEDLIDGQSITETTDESTGIAKRVVIDWRGSARTADLRPALAIHDQNGKVLKLPRGSDARALLPVEAIIGVDPGARVKAGDILARVSTESAKTRDITGGLPRVAELFEARRPKDAAIIAEKSGTISFGRDYKNKRRLSLTPHDGSEPVEYLIPKGKHIHLQDGDVVEVGDFIVDGNPAPHDILAIKGVEELAAYLVNEIQEVYRLQGVSINDKHIEVIVRQMLQKVEITDSGDSEILTGDQIDRTELQEINEQLVSEGKKPVQGVPVLLGITKASLQTRSFISAASFQETTRVLTEAAVNGKVDTLEGLKENVIVGSLIPAGTGAMIADIKSIARRRDELIMAQKTAESGAALQELPAAE</sequence>
<name>RPOC_METS4</name>
<comment type="function">
    <text evidence="1">DNA-dependent RNA polymerase catalyzes the transcription of DNA into RNA using the four ribonucleoside triphosphates as substrates.</text>
</comment>
<comment type="catalytic activity">
    <reaction evidence="1">
        <text>RNA(n) + a ribonucleoside 5'-triphosphate = RNA(n+1) + diphosphate</text>
        <dbReference type="Rhea" id="RHEA:21248"/>
        <dbReference type="Rhea" id="RHEA-COMP:14527"/>
        <dbReference type="Rhea" id="RHEA-COMP:17342"/>
        <dbReference type="ChEBI" id="CHEBI:33019"/>
        <dbReference type="ChEBI" id="CHEBI:61557"/>
        <dbReference type="ChEBI" id="CHEBI:140395"/>
        <dbReference type="EC" id="2.7.7.6"/>
    </reaction>
</comment>
<comment type="cofactor">
    <cofactor evidence="1">
        <name>Mg(2+)</name>
        <dbReference type="ChEBI" id="CHEBI:18420"/>
    </cofactor>
    <text evidence="1">Binds 1 Mg(2+) ion per subunit.</text>
</comment>
<comment type="cofactor">
    <cofactor evidence="1">
        <name>Zn(2+)</name>
        <dbReference type="ChEBI" id="CHEBI:29105"/>
    </cofactor>
    <text evidence="1">Binds 2 Zn(2+) ions per subunit.</text>
</comment>
<comment type="subunit">
    <text evidence="1">The RNAP catalytic core consists of 2 alpha, 1 beta, 1 beta' and 1 omega subunit. When a sigma factor is associated with the core the holoenzyme is formed, which can initiate transcription.</text>
</comment>
<comment type="similarity">
    <text evidence="1">Belongs to the RNA polymerase beta' chain family.</text>
</comment>
<dbReference type="EC" id="2.7.7.6" evidence="1"/>
<dbReference type="EMBL" id="CP000943">
    <property type="protein sequence ID" value="ACA14930.1"/>
    <property type="molecule type" value="Genomic_DNA"/>
</dbReference>
<dbReference type="RefSeq" id="WP_012330348.1">
    <property type="nucleotide sequence ID" value="NC_010511.1"/>
</dbReference>
<dbReference type="SMR" id="B0UHX5"/>
<dbReference type="STRING" id="426117.M446_0359"/>
<dbReference type="KEGG" id="met:M446_0359"/>
<dbReference type="eggNOG" id="COG0086">
    <property type="taxonomic scope" value="Bacteria"/>
</dbReference>
<dbReference type="HOGENOM" id="CLU_000524_3_1_5"/>
<dbReference type="GO" id="GO:0000428">
    <property type="term" value="C:DNA-directed RNA polymerase complex"/>
    <property type="evidence" value="ECO:0007669"/>
    <property type="project" value="UniProtKB-KW"/>
</dbReference>
<dbReference type="GO" id="GO:0003677">
    <property type="term" value="F:DNA binding"/>
    <property type="evidence" value="ECO:0007669"/>
    <property type="project" value="UniProtKB-UniRule"/>
</dbReference>
<dbReference type="GO" id="GO:0003899">
    <property type="term" value="F:DNA-directed RNA polymerase activity"/>
    <property type="evidence" value="ECO:0007669"/>
    <property type="project" value="UniProtKB-UniRule"/>
</dbReference>
<dbReference type="GO" id="GO:0000287">
    <property type="term" value="F:magnesium ion binding"/>
    <property type="evidence" value="ECO:0007669"/>
    <property type="project" value="UniProtKB-UniRule"/>
</dbReference>
<dbReference type="GO" id="GO:0008270">
    <property type="term" value="F:zinc ion binding"/>
    <property type="evidence" value="ECO:0007669"/>
    <property type="project" value="UniProtKB-UniRule"/>
</dbReference>
<dbReference type="GO" id="GO:0006351">
    <property type="term" value="P:DNA-templated transcription"/>
    <property type="evidence" value="ECO:0007669"/>
    <property type="project" value="UniProtKB-UniRule"/>
</dbReference>
<dbReference type="CDD" id="cd02655">
    <property type="entry name" value="RNAP_beta'_C"/>
    <property type="match status" value="1"/>
</dbReference>
<dbReference type="CDD" id="cd01609">
    <property type="entry name" value="RNAP_beta'_N"/>
    <property type="match status" value="1"/>
</dbReference>
<dbReference type="Gene3D" id="1.10.132.30">
    <property type="match status" value="1"/>
</dbReference>
<dbReference type="Gene3D" id="1.10.150.390">
    <property type="match status" value="1"/>
</dbReference>
<dbReference type="Gene3D" id="1.10.1790.20">
    <property type="match status" value="1"/>
</dbReference>
<dbReference type="Gene3D" id="1.10.40.90">
    <property type="match status" value="1"/>
</dbReference>
<dbReference type="Gene3D" id="2.40.40.20">
    <property type="match status" value="1"/>
</dbReference>
<dbReference type="Gene3D" id="2.40.50.100">
    <property type="match status" value="3"/>
</dbReference>
<dbReference type="Gene3D" id="4.10.860.120">
    <property type="entry name" value="RNA polymerase II, clamp domain"/>
    <property type="match status" value="1"/>
</dbReference>
<dbReference type="Gene3D" id="1.10.274.100">
    <property type="entry name" value="RNA polymerase Rpb1, domain 3"/>
    <property type="match status" value="2"/>
</dbReference>
<dbReference type="HAMAP" id="MF_01322">
    <property type="entry name" value="RNApol_bact_RpoC"/>
    <property type="match status" value="1"/>
</dbReference>
<dbReference type="InterPro" id="IPR045867">
    <property type="entry name" value="DNA-dir_RpoC_beta_prime"/>
</dbReference>
<dbReference type="InterPro" id="IPR012754">
    <property type="entry name" value="DNA-dir_RpoC_beta_prime_bact"/>
</dbReference>
<dbReference type="InterPro" id="IPR000722">
    <property type="entry name" value="RNA_pol_asu"/>
</dbReference>
<dbReference type="InterPro" id="IPR006592">
    <property type="entry name" value="RNA_pol_N"/>
</dbReference>
<dbReference type="InterPro" id="IPR007080">
    <property type="entry name" value="RNA_pol_Rpb1_1"/>
</dbReference>
<dbReference type="InterPro" id="IPR007066">
    <property type="entry name" value="RNA_pol_Rpb1_3"/>
</dbReference>
<dbReference type="InterPro" id="IPR042102">
    <property type="entry name" value="RNA_pol_Rpb1_3_sf"/>
</dbReference>
<dbReference type="InterPro" id="IPR007083">
    <property type="entry name" value="RNA_pol_Rpb1_4"/>
</dbReference>
<dbReference type="InterPro" id="IPR007081">
    <property type="entry name" value="RNA_pol_Rpb1_5"/>
</dbReference>
<dbReference type="InterPro" id="IPR044893">
    <property type="entry name" value="RNA_pol_Rpb1_clamp_domain"/>
</dbReference>
<dbReference type="InterPro" id="IPR038120">
    <property type="entry name" value="Rpb1_funnel_sf"/>
</dbReference>
<dbReference type="NCBIfam" id="TIGR02386">
    <property type="entry name" value="rpoC_TIGR"/>
    <property type="match status" value="1"/>
</dbReference>
<dbReference type="PANTHER" id="PTHR19376">
    <property type="entry name" value="DNA-DIRECTED RNA POLYMERASE"/>
    <property type="match status" value="1"/>
</dbReference>
<dbReference type="PANTHER" id="PTHR19376:SF54">
    <property type="entry name" value="DNA-DIRECTED RNA POLYMERASE SUBUNIT BETA"/>
    <property type="match status" value="1"/>
</dbReference>
<dbReference type="Pfam" id="PF04997">
    <property type="entry name" value="RNA_pol_Rpb1_1"/>
    <property type="match status" value="1"/>
</dbReference>
<dbReference type="Pfam" id="PF00623">
    <property type="entry name" value="RNA_pol_Rpb1_2"/>
    <property type="match status" value="1"/>
</dbReference>
<dbReference type="Pfam" id="PF04983">
    <property type="entry name" value="RNA_pol_Rpb1_3"/>
    <property type="match status" value="1"/>
</dbReference>
<dbReference type="Pfam" id="PF05000">
    <property type="entry name" value="RNA_pol_Rpb1_4"/>
    <property type="match status" value="1"/>
</dbReference>
<dbReference type="Pfam" id="PF04998">
    <property type="entry name" value="RNA_pol_Rpb1_5"/>
    <property type="match status" value="1"/>
</dbReference>
<dbReference type="SMART" id="SM00663">
    <property type="entry name" value="RPOLA_N"/>
    <property type="match status" value="1"/>
</dbReference>
<dbReference type="SUPFAM" id="SSF64484">
    <property type="entry name" value="beta and beta-prime subunits of DNA dependent RNA-polymerase"/>
    <property type="match status" value="1"/>
</dbReference>
<keyword id="KW-0240">DNA-directed RNA polymerase</keyword>
<keyword id="KW-0460">Magnesium</keyword>
<keyword id="KW-0479">Metal-binding</keyword>
<keyword id="KW-0548">Nucleotidyltransferase</keyword>
<keyword id="KW-0804">Transcription</keyword>
<keyword id="KW-0808">Transferase</keyword>
<keyword id="KW-0862">Zinc</keyword>